<keyword id="KW-0067">ATP-binding</keyword>
<keyword id="KW-0460">Magnesium</keyword>
<keyword id="KW-0547">Nucleotide-binding</keyword>
<keyword id="KW-1185">Reference proteome</keyword>
<keyword id="KW-0808">Transferase</keyword>
<keyword id="KW-0819">tRNA processing</keyword>
<evidence type="ECO:0000255" key="1">
    <source>
        <dbReference type="HAMAP-Rule" id="MF_00185"/>
    </source>
</evidence>
<organism>
    <name type="scientific">Frankia alni (strain DSM 45986 / CECT 9034 / ACN14a)</name>
    <dbReference type="NCBI Taxonomy" id="326424"/>
    <lineage>
        <taxon>Bacteria</taxon>
        <taxon>Bacillati</taxon>
        <taxon>Actinomycetota</taxon>
        <taxon>Actinomycetes</taxon>
        <taxon>Frankiales</taxon>
        <taxon>Frankiaceae</taxon>
        <taxon>Frankia</taxon>
    </lineage>
</organism>
<gene>
    <name evidence="1" type="primary">miaA</name>
    <name type="ordered locus">FRAAL5709</name>
</gene>
<proteinExistence type="inferred from homology"/>
<sequence>MGPTAAGKSDLGIELALALGGEVVNADSMQLYRGMDIGTAKVPLEQRRGVPHHLLDVWDVTRAADVASFQADARRVIDGLLAVGRTPVLVGGSGLYLRAALDDLTFPGTDPAVRARWERELASRGAPALHGELARLAPRAAAAILPTNGRRIVRALEVVELTGTFEATLPEHRSVYDVVQIGIDRTDLDERIVERVERMWGAGFPDEVRRLAEMGLREGRTASRALGYAQLLAWFDGAMDSAEEAKQATITATRRFARRQRSWFRRDERIVWLDQPDVTQVLRLVGSL</sequence>
<name>MIAA_FRAAA</name>
<dbReference type="EC" id="2.5.1.75" evidence="1"/>
<dbReference type="EMBL" id="CT573213">
    <property type="protein sequence ID" value="CAJ64341.1"/>
    <property type="molecule type" value="Genomic_DNA"/>
</dbReference>
<dbReference type="SMR" id="Q0RDX5"/>
<dbReference type="STRING" id="326424.FRAAL5709"/>
<dbReference type="KEGG" id="fal:FRAAL5709"/>
<dbReference type="eggNOG" id="COG0324">
    <property type="taxonomic scope" value="Bacteria"/>
</dbReference>
<dbReference type="HOGENOM" id="CLU_032616_0_1_11"/>
<dbReference type="Proteomes" id="UP000000657">
    <property type="component" value="Chromosome"/>
</dbReference>
<dbReference type="GO" id="GO:0005524">
    <property type="term" value="F:ATP binding"/>
    <property type="evidence" value="ECO:0007669"/>
    <property type="project" value="UniProtKB-UniRule"/>
</dbReference>
<dbReference type="GO" id="GO:0052381">
    <property type="term" value="F:tRNA dimethylallyltransferase activity"/>
    <property type="evidence" value="ECO:0007669"/>
    <property type="project" value="UniProtKB-UniRule"/>
</dbReference>
<dbReference type="GO" id="GO:0006400">
    <property type="term" value="P:tRNA modification"/>
    <property type="evidence" value="ECO:0007669"/>
    <property type="project" value="TreeGrafter"/>
</dbReference>
<dbReference type="FunFam" id="1.10.20.140:FF:000001">
    <property type="entry name" value="tRNA dimethylallyltransferase"/>
    <property type="match status" value="1"/>
</dbReference>
<dbReference type="Gene3D" id="1.10.20.140">
    <property type="match status" value="1"/>
</dbReference>
<dbReference type="Gene3D" id="3.40.50.300">
    <property type="entry name" value="P-loop containing nucleotide triphosphate hydrolases"/>
    <property type="match status" value="1"/>
</dbReference>
<dbReference type="HAMAP" id="MF_00185">
    <property type="entry name" value="IPP_trans"/>
    <property type="match status" value="1"/>
</dbReference>
<dbReference type="InterPro" id="IPR039657">
    <property type="entry name" value="Dimethylallyltransferase"/>
</dbReference>
<dbReference type="InterPro" id="IPR018022">
    <property type="entry name" value="IPT"/>
</dbReference>
<dbReference type="InterPro" id="IPR027417">
    <property type="entry name" value="P-loop_NTPase"/>
</dbReference>
<dbReference type="NCBIfam" id="TIGR00174">
    <property type="entry name" value="miaA"/>
    <property type="match status" value="1"/>
</dbReference>
<dbReference type="PANTHER" id="PTHR11088">
    <property type="entry name" value="TRNA DIMETHYLALLYLTRANSFERASE"/>
    <property type="match status" value="1"/>
</dbReference>
<dbReference type="PANTHER" id="PTHR11088:SF60">
    <property type="entry name" value="TRNA DIMETHYLALLYLTRANSFERASE"/>
    <property type="match status" value="1"/>
</dbReference>
<dbReference type="Pfam" id="PF01715">
    <property type="entry name" value="IPPT"/>
    <property type="match status" value="1"/>
</dbReference>
<dbReference type="SUPFAM" id="SSF52540">
    <property type="entry name" value="P-loop containing nucleoside triphosphate hydrolases"/>
    <property type="match status" value="1"/>
</dbReference>
<protein>
    <recommendedName>
        <fullName evidence="1">tRNA dimethylallyltransferase</fullName>
        <ecNumber evidence="1">2.5.1.75</ecNumber>
    </recommendedName>
    <alternativeName>
        <fullName evidence="1">Dimethylallyl diphosphate:tRNA dimethylallyltransferase</fullName>
        <shortName evidence="1">DMAPP:tRNA dimethylallyltransferase</shortName>
        <shortName evidence="1">DMATase</shortName>
    </alternativeName>
    <alternativeName>
        <fullName evidence="1">Isopentenyl-diphosphate:tRNA isopentenyltransferase</fullName>
        <shortName evidence="1">IPP transferase</shortName>
        <shortName evidence="1">IPPT</shortName>
        <shortName evidence="1">IPTase</shortName>
    </alternativeName>
</protein>
<accession>Q0RDX5</accession>
<comment type="function">
    <text evidence="1">Catalyzes the transfer of a dimethylallyl group onto the adenine at position 37 in tRNAs that read codons beginning with uridine, leading to the formation of N6-(dimethylallyl)adenosine (i(6)A).</text>
</comment>
<comment type="catalytic activity">
    <reaction evidence="1">
        <text>adenosine(37) in tRNA + dimethylallyl diphosphate = N(6)-dimethylallyladenosine(37) in tRNA + diphosphate</text>
        <dbReference type="Rhea" id="RHEA:26482"/>
        <dbReference type="Rhea" id="RHEA-COMP:10162"/>
        <dbReference type="Rhea" id="RHEA-COMP:10375"/>
        <dbReference type="ChEBI" id="CHEBI:33019"/>
        <dbReference type="ChEBI" id="CHEBI:57623"/>
        <dbReference type="ChEBI" id="CHEBI:74411"/>
        <dbReference type="ChEBI" id="CHEBI:74415"/>
        <dbReference type="EC" id="2.5.1.75"/>
    </reaction>
</comment>
<comment type="cofactor">
    <cofactor evidence="1">
        <name>Mg(2+)</name>
        <dbReference type="ChEBI" id="CHEBI:18420"/>
    </cofactor>
</comment>
<comment type="subunit">
    <text evidence="1">Monomer.</text>
</comment>
<comment type="similarity">
    <text evidence="1">Belongs to the IPP transferase family.</text>
</comment>
<feature type="chain" id="PRO_0000377164" description="tRNA dimethylallyltransferase">
    <location>
        <begin position="1"/>
        <end position="288"/>
    </location>
</feature>
<feature type="region of interest" description="Interaction with substrate tRNA" evidence="1">
    <location>
        <begin position="27"/>
        <end position="30"/>
    </location>
</feature>
<feature type="binding site" evidence="1">
    <location>
        <begin position="2"/>
        <end position="9"/>
    </location>
    <ligand>
        <name>ATP</name>
        <dbReference type="ChEBI" id="CHEBI:30616"/>
    </ligand>
</feature>
<feature type="binding site" evidence="1">
    <location>
        <begin position="4"/>
        <end position="9"/>
    </location>
    <ligand>
        <name>substrate</name>
    </ligand>
</feature>
<feature type="site" description="Interaction with substrate tRNA" evidence="1">
    <location>
        <position position="93"/>
    </location>
</feature>
<feature type="site" description="Interaction with substrate tRNA" evidence="1">
    <location>
        <position position="114"/>
    </location>
</feature>
<reference key="1">
    <citation type="journal article" date="2007" name="Genome Res.">
        <title>Genome characteristics of facultatively symbiotic Frankia sp. strains reflect host range and host plant biogeography.</title>
        <authorList>
            <person name="Normand P."/>
            <person name="Lapierre P."/>
            <person name="Tisa L.S."/>
            <person name="Gogarten J.P."/>
            <person name="Alloisio N."/>
            <person name="Bagnarol E."/>
            <person name="Bassi C.A."/>
            <person name="Berry A.M."/>
            <person name="Bickhart D.M."/>
            <person name="Choisne N."/>
            <person name="Couloux A."/>
            <person name="Cournoyer B."/>
            <person name="Cruveiller S."/>
            <person name="Daubin V."/>
            <person name="Demange N."/>
            <person name="Francino M.P."/>
            <person name="Goltsman E."/>
            <person name="Huang Y."/>
            <person name="Kopp O.R."/>
            <person name="Labarre L."/>
            <person name="Lapidus A."/>
            <person name="Lavire C."/>
            <person name="Marechal J."/>
            <person name="Martinez M."/>
            <person name="Mastronunzio J.E."/>
            <person name="Mullin B.C."/>
            <person name="Niemann J."/>
            <person name="Pujic P."/>
            <person name="Rawnsley T."/>
            <person name="Rouy Z."/>
            <person name="Schenowitz C."/>
            <person name="Sellstedt A."/>
            <person name="Tavares F."/>
            <person name="Tomkins J.P."/>
            <person name="Vallenet D."/>
            <person name="Valverde C."/>
            <person name="Wall L.G."/>
            <person name="Wang Y."/>
            <person name="Medigue C."/>
            <person name="Benson D.R."/>
        </authorList>
    </citation>
    <scope>NUCLEOTIDE SEQUENCE [LARGE SCALE GENOMIC DNA]</scope>
    <source>
        <strain>DSM 45986 / CECT 9034 / ACN14a</strain>
    </source>
</reference>